<keyword id="KW-1203">Blood coagulation cascade inhibiting toxin</keyword>
<keyword id="KW-0106">Calcium</keyword>
<keyword id="KW-1015">Disulfide bond</keyword>
<keyword id="KW-1199">Hemostasis impairing toxin</keyword>
<keyword id="KW-0479">Metal-binding</keyword>
<keyword id="KW-0964">Secreted</keyword>
<keyword id="KW-0732">Signal</keyword>
<keyword id="KW-0800">Toxin</keyword>
<protein>
    <recommendedName>
        <fullName>Snaclec coagulation factor IX/factor X-binding protein subunit B1</fullName>
        <shortName>IX/X-bp subunit B1</shortName>
    </recommendedName>
</protein>
<proteinExistence type="evidence at transcript level"/>
<reference key="1">
    <citation type="submission" date="2001-03" db="EMBL/GenBank/DDBJ databases">
        <title>Cloning and characterization of C-type lectins from Trimeresurus stejnegeri venom.</title>
        <authorList>
            <person name="Lee W.-H."/>
            <person name="Liu H."/>
            <person name="Zhang Y."/>
        </authorList>
    </citation>
    <scope>NUCLEOTIDE SEQUENCE [MRNA]</scope>
    <source>
        <tissue>Venom gland</tissue>
    </source>
</reference>
<sequence length="144" mass="16709">MGRFIFVSFGLLVVFLSLSGTAADCLSGWSSYEGHCYKPFNELKNWADAENFCTQQQAGGHLVSFQSSEEADFVVKLAFQTFDHSIFWMGLSNVWNQCNWQWSNAAMLRYKAWAEESYCVYFKSTNNKWRSRSCRMMANFVCEF</sequence>
<feature type="signal peptide" evidence="1">
    <location>
        <begin position="1"/>
        <end position="23"/>
    </location>
</feature>
<feature type="chain" id="PRO_0000356314" description="Snaclec coagulation factor IX/factor X-binding protein subunit B1">
    <location>
        <begin position="24"/>
        <end position="144"/>
    </location>
</feature>
<feature type="domain" description="C-type lectin" evidence="2">
    <location>
        <begin position="32"/>
        <end position="143"/>
    </location>
</feature>
<feature type="disulfide bond" evidence="2">
    <location>
        <begin position="25"/>
        <end position="36"/>
    </location>
</feature>
<feature type="disulfide bond" evidence="2">
    <location>
        <begin position="53"/>
        <end position="142"/>
    </location>
</feature>
<feature type="disulfide bond" description="Interchain (with C-102 in subunit A)" evidence="2">
    <location>
        <position position="98"/>
    </location>
</feature>
<feature type="disulfide bond" evidence="2">
    <location>
        <begin position="119"/>
        <end position="134"/>
    </location>
</feature>
<evidence type="ECO:0000250" key="1"/>
<evidence type="ECO:0000255" key="2">
    <source>
        <dbReference type="PROSITE-ProRule" id="PRU00040"/>
    </source>
</evidence>
<evidence type="ECO:0000305" key="3"/>
<dbReference type="EMBL" id="AF354912">
    <property type="protein sequence ID" value="AAQ15154.1"/>
    <property type="molecule type" value="mRNA"/>
</dbReference>
<dbReference type="EMBL" id="AF354913">
    <property type="protein sequence ID" value="AAQ15155.1"/>
    <property type="molecule type" value="mRNA"/>
</dbReference>
<dbReference type="SMR" id="Q71RR2"/>
<dbReference type="GO" id="GO:0005576">
    <property type="term" value="C:extracellular region"/>
    <property type="evidence" value="ECO:0007669"/>
    <property type="project" value="UniProtKB-SubCell"/>
</dbReference>
<dbReference type="GO" id="GO:0046872">
    <property type="term" value="F:metal ion binding"/>
    <property type="evidence" value="ECO:0007669"/>
    <property type="project" value="UniProtKB-KW"/>
</dbReference>
<dbReference type="GO" id="GO:0090729">
    <property type="term" value="F:toxin activity"/>
    <property type="evidence" value="ECO:0007669"/>
    <property type="project" value="UniProtKB-KW"/>
</dbReference>
<dbReference type="FunFam" id="3.10.100.10:FF:000087">
    <property type="entry name" value="Snaclec rhodocetin subunit delta"/>
    <property type="match status" value="1"/>
</dbReference>
<dbReference type="Gene3D" id="3.10.100.10">
    <property type="entry name" value="Mannose-Binding Protein A, subunit A"/>
    <property type="match status" value="1"/>
</dbReference>
<dbReference type="InterPro" id="IPR001304">
    <property type="entry name" value="C-type_lectin-like"/>
</dbReference>
<dbReference type="InterPro" id="IPR016186">
    <property type="entry name" value="C-type_lectin-like/link_sf"/>
</dbReference>
<dbReference type="InterPro" id="IPR050111">
    <property type="entry name" value="C-type_lectin/snaclec_domain"/>
</dbReference>
<dbReference type="InterPro" id="IPR018378">
    <property type="entry name" value="C-type_lectin_CS"/>
</dbReference>
<dbReference type="InterPro" id="IPR016187">
    <property type="entry name" value="CTDL_fold"/>
</dbReference>
<dbReference type="PANTHER" id="PTHR22803">
    <property type="entry name" value="MANNOSE, PHOSPHOLIPASE, LECTIN RECEPTOR RELATED"/>
    <property type="match status" value="1"/>
</dbReference>
<dbReference type="Pfam" id="PF00059">
    <property type="entry name" value="Lectin_C"/>
    <property type="match status" value="1"/>
</dbReference>
<dbReference type="PRINTS" id="PR01504">
    <property type="entry name" value="PNCREATITSAP"/>
</dbReference>
<dbReference type="SMART" id="SM00034">
    <property type="entry name" value="CLECT"/>
    <property type="match status" value="1"/>
</dbReference>
<dbReference type="SUPFAM" id="SSF56436">
    <property type="entry name" value="C-type lectin-like"/>
    <property type="match status" value="1"/>
</dbReference>
<dbReference type="PROSITE" id="PS00615">
    <property type="entry name" value="C_TYPE_LECTIN_1"/>
    <property type="match status" value="1"/>
</dbReference>
<dbReference type="PROSITE" id="PS50041">
    <property type="entry name" value="C_TYPE_LECTIN_2"/>
    <property type="match status" value="1"/>
</dbReference>
<accession>Q71RR2</accession>
<name>SL9B1_TRIST</name>
<comment type="function">
    <text evidence="1">Anticoagulant protein which binds to the gamma-carboxyglutamic acid-domain regions of factors IX (F9) and factor X (F10) in the presence of calcium with a 1 to 1 stoichiometry.</text>
</comment>
<comment type="subunit">
    <text evidence="1">Heterodimer of subunits A and B1; disulfide-linked.</text>
</comment>
<comment type="subcellular location">
    <subcellularLocation>
        <location evidence="1">Secreted</location>
    </subcellularLocation>
</comment>
<comment type="tissue specificity">
    <text>Expressed by the venom gland.</text>
</comment>
<comment type="miscellaneous">
    <text evidence="1">Calcium is required for ligand binding.</text>
</comment>
<comment type="similarity">
    <text evidence="3">Belongs to the snaclec family.</text>
</comment>
<organism>
    <name type="scientific">Trimeresurus stejnegeri</name>
    <name type="common">Chinese green tree viper</name>
    <name type="synonym">Viridovipera stejnegeri</name>
    <dbReference type="NCBI Taxonomy" id="39682"/>
    <lineage>
        <taxon>Eukaryota</taxon>
        <taxon>Metazoa</taxon>
        <taxon>Chordata</taxon>
        <taxon>Craniata</taxon>
        <taxon>Vertebrata</taxon>
        <taxon>Euteleostomi</taxon>
        <taxon>Lepidosauria</taxon>
        <taxon>Squamata</taxon>
        <taxon>Bifurcata</taxon>
        <taxon>Unidentata</taxon>
        <taxon>Episquamata</taxon>
        <taxon>Toxicofera</taxon>
        <taxon>Serpentes</taxon>
        <taxon>Colubroidea</taxon>
        <taxon>Viperidae</taxon>
        <taxon>Crotalinae</taxon>
        <taxon>Trimeresurus</taxon>
    </lineage>
</organism>